<gene>
    <name evidence="1" type="primary">ldh</name>
    <name type="ordered locus">MG460</name>
</gene>
<name>LDH_MYCGE</name>
<accession>P47698</accession>
<accession>Q49200</accession>
<accession>Q59528</accession>
<feature type="chain" id="PRO_0000168368" description="L-lactate dehydrogenase">
    <location>
        <begin position="1"/>
        <end position="312"/>
    </location>
</feature>
<feature type="active site" description="Proton acceptor" evidence="1">
    <location>
        <position position="177"/>
    </location>
</feature>
<feature type="binding site" evidence="1">
    <location>
        <position position="14"/>
    </location>
    <ligand>
        <name>NAD(+)</name>
        <dbReference type="ChEBI" id="CHEBI:57540"/>
    </ligand>
</feature>
<feature type="binding site" evidence="1">
    <location>
        <position position="35"/>
    </location>
    <ligand>
        <name>NAD(+)</name>
        <dbReference type="ChEBI" id="CHEBI:57540"/>
    </ligand>
</feature>
<feature type="binding site" evidence="1">
    <location>
        <position position="66"/>
    </location>
    <ligand>
        <name>NAD(+)</name>
        <dbReference type="ChEBI" id="CHEBI:57540"/>
    </ligand>
</feature>
<feature type="binding site" evidence="1">
    <location>
        <position position="83"/>
    </location>
    <ligand>
        <name>substrate</name>
    </ligand>
</feature>
<feature type="binding site" evidence="1">
    <location>
        <position position="90"/>
    </location>
    <ligand>
        <name>substrate</name>
    </ligand>
</feature>
<feature type="binding site" evidence="1">
    <location>
        <position position="103"/>
    </location>
    <ligand>
        <name>NAD(+)</name>
        <dbReference type="ChEBI" id="CHEBI:57540"/>
    </ligand>
</feature>
<feature type="binding site" evidence="1">
    <location>
        <begin position="120"/>
        <end position="122"/>
    </location>
    <ligand>
        <name>NAD(+)</name>
        <dbReference type="ChEBI" id="CHEBI:57540"/>
    </ligand>
</feature>
<feature type="binding site" evidence="1">
    <location>
        <begin position="122"/>
        <end position="125"/>
    </location>
    <ligand>
        <name>substrate</name>
    </ligand>
</feature>
<feature type="binding site" evidence="1">
    <location>
        <position position="145"/>
    </location>
    <ligand>
        <name>NAD(+)</name>
        <dbReference type="ChEBI" id="CHEBI:57540"/>
    </ligand>
</feature>
<feature type="binding site" evidence="1">
    <location>
        <begin position="150"/>
        <end position="153"/>
    </location>
    <ligand>
        <name>substrate</name>
    </ligand>
</feature>
<feature type="binding site" evidence="1">
    <location>
        <position position="229"/>
    </location>
    <ligand>
        <name>substrate</name>
    </ligand>
</feature>
<feature type="modified residue" description="Phosphotyrosine" evidence="1">
    <location>
        <position position="220"/>
    </location>
</feature>
<organism>
    <name type="scientific">Mycoplasma genitalium (strain ATCC 33530 / DSM 19775 / NCTC 10195 / G37)</name>
    <name type="common">Mycoplasmoides genitalium</name>
    <dbReference type="NCBI Taxonomy" id="243273"/>
    <lineage>
        <taxon>Bacteria</taxon>
        <taxon>Bacillati</taxon>
        <taxon>Mycoplasmatota</taxon>
        <taxon>Mycoplasmoidales</taxon>
        <taxon>Mycoplasmoidaceae</taxon>
        <taxon>Mycoplasmoides</taxon>
    </lineage>
</organism>
<keyword id="KW-0963">Cytoplasm</keyword>
<keyword id="KW-0520">NAD</keyword>
<keyword id="KW-0560">Oxidoreductase</keyword>
<keyword id="KW-0597">Phosphoprotein</keyword>
<keyword id="KW-1185">Reference proteome</keyword>
<proteinExistence type="inferred from homology"/>
<sequence>MKGPKIAIVGSGAVGTSFLYAAMTRALGSEYMIIDINEKAKVGNVFDLQDASSSCPNFGKVVAGEYSQLKDYDFIFISAGRPQKQGGETRLQLLEGNVEIMKSIAKEIKKSGFNGVTLIASNPVDIMSYTYLKVTGFEPNKVIGSGTLLDSARLRYAIATKYQMSSKDVQAYVIGEHGDSSVSIISSAKIAGLSLKHFSKASDIEKEFGEIDQFIRRRAYEIIERKGATFYGIGEASADVAEQILKDTKEVRVVAPLLTGQYGAKDMMFGTPCVLSRKGIEKILEIELSNTEKVALENSIKVLKDNIKLAKL</sequence>
<evidence type="ECO:0000255" key="1">
    <source>
        <dbReference type="HAMAP-Rule" id="MF_00488"/>
    </source>
</evidence>
<evidence type="ECO:0000305" key="2"/>
<comment type="function">
    <text evidence="1">Catalyzes the conversion of lactate to pyruvate.</text>
</comment>
<comment type="catalytic activity">
    <reaction evidence="1">
        <text>(S)-lactate + NAD(+) = pyruvate + NADH + H(+)</text>
        <dbReference type="Rhea" id="RHEA:23444"/>
        <dbReference type="ChEBI" id="CHEBI:15361"/>
        <dbReference type="ChEBI" id="CHEBI:15378"/>
        <dbReference type="ChEBI" id="CHEBI:16651"/>
        <dbReference type="ChEBI" id="CHEBI:57540"/>
        <dbReference type="ChEBI" id="CHEBI:57945"/>
        <dbReference type="EC" id="1.1.1.27"/>
    </reaction>
</comment>
<comment type="pathway">
    <text evidence="1">Fermentation; pyruvate fermentation to lactate; (S)-lactate from pyruvate: step 1/1.</text>
</comment>
<comment type="subunit">
    <text evidence="1">Homotetramer.</text>
</comment>
<comment type="subcellular location">
    <subcellularLocation>
        <location evidence="1">Cytoplasm</location>
    </subcellularLocation>
</comment>
<comment type="similarity">
    <text evidence="1 2">Belongs to the LDH/MDH superfamily. LDH family.</text>
</comment>
<comment type="sequence caution" evidence="2">
    <conflict type="erroneous initiation">
        <sequence resource="EMBL-CDS" id="AAC43202"/>
    </conflict>
</comment>
<dbReference type="EC" id="1.1.1.27" evidence="1"/>
<dbReference type="EMBL" id="L43967">
    <property type="protein sequence ID" value="AAC72480.1"/>
    <property type="molecule type" value="Genomic_DNA"/>
</dbReference>
<dbReference type="EMBL" id="U01725">
    <property type="protein sequence ID" value="AAC43202.1"/>
    <property type="status" value="ALT_INIT"/>
    <property type="molecule type" value="Unassigned_DNA"/>
</dbReference>
<dbReference type="EMBL" id="U01708">
    <property type="protein sequence ID" value="AAB01020.1"/>
    <property type="status" value="ALT_SEQ"/>
    <property type="molecule type" value="Genomic_DNA"/>
</dbReference>
<dbReference type="PIR" id="H64250">
    <property type="entry name" value="H64250"/>
</dbReference>
<dbReference type="RefSeq" id="WP_009885571.1">
    <property type="nucleotide sequence ID" value="NC_000908.2"/>
</dbReference>
<dbReference type="SMR" id="P47698"/>
<dbReference type="FunCoup" id="P47698">
    <property type="interactions" value="80"/>
</dbReference>
<dbReference type="STRING" id="243273.MG_460"/>
<dbReference type="GeneID" id="88282641"/>
<dbReference type="KEGG" id="mge:MG_460"/>
<dbReference type="eggNOG" id="COG0039">
    <property type="taxonomic scope" value="Bacteria"/>
</dbReference>
<dbReference type="HOGENOM" id="CLU_045401_1_2_14"/>
<dbReference type="InParanoid" id="P47698"/>
<dbReference type="OrthoDB" id="9802969at2"/>
<dbReference type="BioCyc" id="MGEN243273:G1GJ2-554-MONOMER"/>
<dbReference type="UniPathway" id="UPA00554">
    <property type="reaction ID" value="UER00611"/>
</dbReference>
<dbReference type="Proteomes" id="UP000000807">
    <property type="component" value="Chromosome"/>
</dbReference>
<dbReference type="GO" id="GO:0005737">
    <property type="term" value="C:cytoplasm"/>
    <property type="evidence" value="ECO:0007669"/>
    <property type="project" value="UniProtKB-SubCell"/>
</dbReference>
<dbReference type="GO" id="GO:0004459">
    <property type="term" value="F:L-lactate dehydrogenase activity"/>
    <property type="evidence" value="ECO:0000318"/>
    <property type="project" value="GO_Central"/>
</dbReference>
<dbReference type="GO" id="GO:0006096">
    <property type="term" value="P:glycolytic process"/>
    <property type="evidence" value="ECO:0007669"/>
    <property type="project" value="UniProtKB-UniRule"/>
</dbReference>
<dbReference type="GO" id="GO:0006089">
    <property type="term" value="P:lactate metabolic process"/>
    <property type="evidence" value="ECO:0000318"/>
    <property type="project" value="GO_Central"/>
</dbReference>
<dbReference type="GO" id="GO:0006090">
    <property type="term" value="P:pyruvate metabolic process"/>
    <property type="evidence" value="ECO:0000318"/>
    <property type="project" value="GO_Central"/>
</dbReference>
<dbReference type="CDD" id="cd05291">
    <property type="entry name" value="HicDH_like"/>
    <property type="match status" value="1"/>
</dbReference>
<dbReference type="Gene3D" id="3.90.110.10">
    <property type="entry name" value="Lactate dehydrogenase/glycoside hydrolase, family 4, C-terminal"/>
    <property type="match status" value="1"/>
</dbReference>
<dbReference type="Gene3D" id="3.40.50.720">
    <property type="entry name" value="NAD(P)-binding Rossmann-like Domain"/>
    <property type="match status" value="1"/>
</dbReference>
<dbReference type="HAMAP" id="MF_00488">
    <property type="entry name" value="Lactate_dehydrog"/>
    <property type="match status" value="1"/>
</dbReference>
<dbReference type="InterPro" id="IPR001557">
    <property type="entry name" value="L-lactate/malate_DH"/>
</dbReference>
<dbReference type="InterPro" id="IPR011304">
    <property type="entry name" value="L-lactate_DH"/>
</dbReference>
<dbReference type="InterPro" id="IPR018177">
    <property type="entry name" value="L-lactate_DH_AS"/>
</dbReference>
<dbReference type="InterPro" id="IPR022383">
    <property type="entry name" value="Lactate/malate_DH_C"/>
</dbReference>
<dbReference type="InterPro" id="IPR001236">
    <property type="entry name" value="Lactate/malate_DH_N"/>
</dbReference>
<dbReference type="InterPro" id="IPR015955">
    <property type="entry name" value="Lactate_DH/Glyco_Ohase_4_C"/>
</dbReference>
<dbReference type="InterPro" id="IPR036291">
    <property type="entry name" value="NAD(P)-bd_dom_sf"/>
</dbReference>
<dbReference type="NCBIfam" id="TIGR01771">
    <property type="entry name" value="L-LDH-NAD"/>
    <property type="match status" value="1"/>
</dbReference>
<dbReference type="PANTHER" id="PTHR43128">
    <property type="entry name" value="L-2-HYDROXYCARBOXYLATE DEHYDROGENASE (NAD(P)(+))"/>
    <property type="match status" value="1"/>
</dbReference>
<dbReference type="PANTHER" id="PTHR43128:SF16">
    <property type="entry name" value="L-LACTATE DEHYDROGENASE"/>
    <property type="match status" value="1"/>
</dbReference>
<dbReference type="Pfam" id="PF02866">
    <property type="entry name" value="Ldh_1_C"/>
    <property type="match status" value="1"/>
</dbReference>
<dbReference type="Pfam" id="PF00056">
    <property type="entry name" value="Ldh_1_N"/>
    <property type="match status" value="1"/>
</dbReference>
<dbReference type="PIRSF" id="PIRSF000102">
    <property type="entry name" value="Lac_mal_DH"/>
    <property type="match status" value="1"/>
</dbReference>
<dbReference type="PRINTS" id="PR00086">
    <property type="entry name" value="LLDHDRGNASE"/>
</dbReference>
<dbReference type="SUPFAM" id="SSF56327">
    <property type="entry name" value="LDH C-terminal domain-like"/>
    <property type="match status" value="1"/>
</dbReference>
<dbReference type="SUPFAM" id="SSF51735">
    <property type="entry name" value="NAD(P)-binding Rossmann-fold domains"/>
    <property type="match status" value="1"/>
</dbReference>
<dbReference type="PROSITE" id="PS00064">
    <property type="entry name" value="L_LDH"/>
    <property type="match status" value="1"/>
</dbReference>
<reference key="1">
    <citation type="journal article" date="1995" name="Science">
        <title>The minimal gene complement of Mycoplasma genitalium.</title>
        <authorList>
            <person name="Fraser C.M."/>
            <person name="Gocayne J.D."/>
            <person name="White O."/>
            <person name="Adams M.D."/>
            <person name="Clayton R.A."/>
            <person name="Fleischmann R.D."/>
            <person name="Bult C.J."/>
            <person name="Kerlavage A.R."/>
            <person name="Sutton G.G."/>
            <person name="Kelley J.M."/>
            <person name="Fritchman J.L."/>
            <person name="Weidman J.F."/>
            <person name="Small K.V."/>
            <person name="Sandusky M."/>
            <person name="Fuhrmann J.L."/>
            <person name="Nguyen D.T."/>
            <person name="Utterback T.R."/>
            <person name="Saudek D.M."/>
            <person name="Phillips C.A."/>
            <person name="Merrick J.M."/>
            <person name="Tomb J.-F."/>
            <person name="Dougherty B.A."/>
            <person name="Bott K.F."/>
            <person name="Hu P.-C."/>
            <person name="Lucier T.S."/>
            <person name="Peterson S.N."/>
            <person name="Smith H.O."/>
            <person name="Hutchison C.A. III"/>
            <person name="Venter J.C."/>
        </authorList>
    </citation>
    <scope>NUCLEOTIDE SEQUENCE [LARGE SCALE GENOMIC DNA]</scope>
    <source>
        <strain>ATCC 33530 / DSM 19775 / NCTC 10195 / G37</strain>
    </source>
</reference>
<reference key="2">
    <citation type="journal article" date="1993" name="J. Bacteriol.">
        <title>A survey of the Mycoplasma genitalium genome by using random sequencing.</title>
        <authorList>
            <person name="Peterson S.N."/>
            <person name="Hu P.-C."/>
            <person name="Bott K.F."/>
            <person name="Hutchison C.A. III"/>
        </authorList>
    </citation>
    <scope>PARTIAL NUCLEOTIDE SEQUENCE [GENOMIC DNA]</scope>
    <source>
        <strain>ATCC 33530 / DSM 19775 / NCTC 10195 / G37</strain>
    </source>
</reference>
<protein>
    <recommendedName>
        <fullName evidence="1">L-lactate dehydrogenase</fullName>
        <shortName evidence="1">L-LDH</shortName>
        <ecNumber evidence="1">1.1.1.27</ecNumber>
    </recommendedName>
</protein>